<reference key="1">
    <citation type="journal article" date="1995" name="Plant Mol. Biol.">
        <title>Identification of cDNA clones corresponding to two inducible nitrate reductase genes in soybean: analysis in wild-type and nr1 mutant.</title>
        <authorList>
            <person name="Wu S."/>
            <person name="Lu Q."/>
            <person name="Kriz A.L."/>
            <person name="Harper J.E."/>
        </authorList>
    </citation>
    <scope>NUCLEOTIDE SEQUENCE [MRNA]</scope>
    <source>
        <strain>cv. Williams</strain>
        <tissue>Leaf</tissue>
    </source>
</reference>
<comment type="function">
    <text>Nitrate reductase is a key enzyme involved in the first step of nitrate assimilation in plants, fungi and bacteria.</text>
</comment>
<comment type="catalytic activity">
    <reaction>
        <text>nitrite + NAD(+) + H2O = nitrate + NADH + H(+)</text>
        <dbReference type="Rhea" id="RHEA:17913"/>
        <dbReference type="ChEBI" id="CHEBI:15377"/>
        <dbReference type="ChEBI" id="CHEBI:15378"/>
        <dbReference type="ChEBI" id="CHEBI:16301"/>
        <dbReference type="ChEBI" id="CHEBI:17632"/>
        <dbReference type="ChEBI" id="CHEBI:57540"/>
        <dbReference type="ChEBI" id="CHEBI:57945"/>
        <dbReference type="EC" id="1.7.1.1"/>
    </reaction>
</comment>
<comment type="cofactor">
    <cofactor evidence="1">
        <name>FAD</name>
        <dbReference type="ChEBI" id="CHEBI:57692"/>
    </cofactor>
    <text evidence="1">Binds 1 FAD.</text>
</comment>
<comment type="cofactor">
    <cofactor evidence="1">
        <name>heme</name>
        <dbReference type="ChEBI" id="CHEBI:30413"/>
    </cofactor>
    <text evidence="1">Binds 1 heme group. The heme group is called cytochrome b-557.</text>
</comment>
<comment type="cofactor">
    <cofactor evidence="1">
        <name>Mo-molybdopterin</name>
        <dbReference type="ChEBI" id="CHEBI:71302"/>
    </cofactor>
    <text evidence="1">Binds 1 Mo-molybdopterin (Mo-MPT) cofactor per subunit.</text>
</comment>
<comment type="subunit">
    <text evidence="1">Homodimer.</text>
</comment>
<comment type="similarity">
    <text evidence="8">Belongs to the nitrate reductase family.</text>
</comment>
<name>NIA1_SOYBN</name>
<protein>
    <recommendedName>
        <fullName>Inducible nitrate reductase [NADH] 1</fullName>
        <shortName>NR</shortName>
        <ecNumber>1.7.1.1</ecNumber>
    </recommendedName>
</protein>
<gene>
    <name type="primary">INR1</name>
</gene>
<dbReference type="EC" id="1.7.1.1"/>
<dbReference type="EMBL" id="L23854">
    <property type="protein sequence ID" value="AAA96727.1"/>
    <property type="molecule type" value="mRNA"/>
</dbReference>
<dbReference type="PIR" id="A59223">
    <property type="entry name" value="A59223"/>
</dbReference>
<dbReference type="RefSeq" id="NP_001238090.1">
    <property type="nucleotide sequence ID" value="NM_001251161.1"/>
</dbReference>
<dbReference type="SMR" id="P54233"/>
<dbReference type="FunCoup" id="P54233">
    <property type="interactions" value="303"/>
</dbReference>
<dbReference type="STRING" id="3847.P54233"/>
<dbReference type="GeneID" id="732630"/>
<dbReference type="InParanoid" id="P54233"/>
<dbReference type="Proteomes" id="UP000008827">
    <property type="component" value="Unplaced"/>
</dbReference>
<dbReference type="GO" id="GO:0071949">
    <property type="term" value="F:FAD binding"/>
    <property type="evidence" value="ECO:0000250"/>
    <property type="project" value="UniProtKB"/>
</dbReference>
<dbReference type="GO" id="GO:0020037">
    <property type="term" value="F:heme binding"/>
    <property type="evidence" value="ECO:0007669"/>
    <property type="project" value="InterPro"/>
</dbReference>
<dbReference type="GO" id="GO:0030151">
    <property type="term" value="F:molybdenum ion binding"/>
    <property type="evidence" value="ECO:0000250"/>
    <property type="project" value="UniProtKB"/>
</dbReference>
<dbReference type="GO" id="GO:0043546">
    <property type="term" value="F:molybdopterin cofactor binding"/>
    <property type="evidence" value="ECO:0007669"/>
    <property type="project" value="InterPro"/>
</dbReference>
<dbReference type="GO" id="GO:0009703">
    <property type="term" value="F:nitrate reductase (NADH) activity"/>
    <property type="evidence" value="ECO:0000318"/>
    <property type="project" value="GO_Central"/>
</dbReference>
<dbReference type="GO" id="GO:0050464">
    <property type="term" value="F:nitrate reductase (NADPH) activity"/>
    <property type="evidence" value="ECO:0007669"/>
    <property type="project" value="InterPro"/>
</dbReference>
<dbReference type="GO" id="GO:0042128">
    <property type="term" value="P:nitrate assimilation"/>
    <property type="evidence" value="ECO:0000318"/>
    <property type="project" value="GO_Central"/>
</dbReference>
<dbReference type="GO" id="GO:0006809">
    <property type="term" value="P:nitric oxide biosynthetic process"/>
    <property type="evidence" value="ECO:0000318"/>
    <property type="project" value="GO_Central"/>
</dbReference>
<dbReference type="CDD" id="cd06183">
    <property type="entry name" value="cyt_b5_reduct_like"/>
    <property type="match status" value="1"/>
</dbReference>
<dbReference type="CDD" id="cd02112">
    <property type="entry name" value="eukary_NR_Moco"/>
    <property type="match status" value="1"/>
</dbReference>
<dbReference type="FunFam" id="2.40.30.10:FF:000021">
    <property type="entry name" value="NADH-cytochrome b5 reductase"/>
    <property type="match status" value="1"/>
</dbReference>
<dbReference type="FunFam" id="2.60.40.650:FF:000001">
    <property type="entry name" value="Nitrate reductase"/>
    <property type="match status" value="1"/>
</dbReference>
<dbReference type="FunFam" id="3.90.420.10:FF:000003">
    <property type="entry name" value="Nitrate reductase"/>
    <property type="match status" value="1"/>
</dbReference>
<dbReference type="FunFam" id="3.40.50.80:FF:000025">
    <property type="entry name" value="Nitrate reductase [NADH]"/>
    <property type="match status" value="1"/>
</dbReference>
<dbReference type="FunFam" id="3.10.120.10:FF:000007">
    <property type="entry name" value="Sulfite oxidase, mitochondrial"/>
    <property type="match status" value="1"/>
</dbReference>
<dbReference type="Gene3D" id="2.60.40.650">
    <property type="match status" value="1"/>
</dbReference>
<dbReference type="Gene3D" id="3.10.120.10">
    <property type="entry name" value="Cytochrome b5-like heme/steroid binding domain"/>
    <property type="match status" value="1"/>
</dbReference>
<dbReference type="Gene3D" id="3.40.50.80">
    <property type="entry name" value="Nucleotide-binding domain of ferredoxin-NADP reductase (FNR) module"/>
    <property type="match status" value="1"/>
</dbReference>
<dbReference type="Gene3D" id="3.90.420.10">
    <property type="entry name" value="Oxidoreductase, molybdopterin-binding domain"/>
    <property type="match status" value="1"/>
</dbReference>
<dbReference type="Gene3D" id="2.40.30.10">
    <property type="entry name" value="Translation factors"/>
    <property type="match status" value="1"/>
</dbReference>
<dbReference type="InterPro" id="IPR008333">
    <property type="entry name" value="Cbr1-like_FAD-bd_dom"/>
</dbReference>
<dbReference type="InterPro" id="IPR001199">
    <property type="entry name" value="Cyt_B5-like_heme/steroid-bd"/>
</dbReference>
<dbReference type="InterPro" id="IPR036400">
    <property type="entry name" value="Cyt_B5-like_heme/steroid_sf"/>
</dbReference>
<dbReference type="InterPro" id="IPR018506">
    <property type="entry name" value="Cyt_B5_heme-BS"/>
</dbReference>
<dbReference type="InterPro" id="IPR017927">
    <property type="entry name" value="FAD-bd_FR_type"/>
</dbReference>
<dbReference type="InterPro" id="IPR001709">
    <property type="entry name" value="Flavoprot_Pyr_Nucl_cyt_Rdtase"/>
</dbReference>
<dbReference type="InterPro" id="IPR039261">
    <property type="entry name" value="FNR_nucleotide-bd"/>
</dbReference>
<dbReference type="InterPro" id="IPR014756">
    <property type="entry name" value="Ig_E-set"/>
</dbReference>
<dbReference type="InterPro" id="IPR005066">
    <property type="entry name" value="MoCF_OxRdtse_dimer"/>
</dbReference>
<dbReference type="InterPro" id="IPR008335">
    <property type="entry name" value="Mopterin_OxRdtase_euk"/>
</dbReference>
<dbReference type="InterPro" id="IPR012137">
    <property type="entry name" value="Nitr_rd_NADH"/>
</dbReference>
<dbReference type="InterPro" id="IPR001433">
    <property type="entry name" value="OxRdtase_FAD/NAD-bd"/>
</dbReference>
<dbReference type="InterPro" id="IPR000572">
    <property type="entry name" value="OxRdtase_Mopterin-bd_dom"/>
</dbReference>
<dbReference type="InterPro" id="IPR036374">
    <property type="entry name" value="OxRdtase_Mopterin-bd_sf"/>
</dbReference>
<dbReference type="InterPro" id="IPR022407">
    <property type="entry name" value="OxRdtase_Mopterin_BS"/>
</dbReference>
<dbReference type="InterPro" id="IPR017938">
    <property type="entry name" value="Riboflavin_synthase-like_b-brl"/>
</dbReference>
<dbReference type="PANTHER" id="PTHR19372:SF7">
    <property type="entry name" value="SULFITE OXIDASE, MITOCHONDRIAL"/>
    <property type="match status" value="1"/>
</dbReference>
<dbReference type="PANTHER" id="PTHR19372">
    <property type="entry name" value="SULFITE REDUCTASE"/>
    <property type="match status" value="1"/>
</dbReference>
<dbReference type="Pfam" id="PF00173">
    <property type="entry name" value="Cyt-b5"/>
    <property type="match status" value="1"/>
</dbReference>
<dbReference type="Pfam" id="PF00970">
    <property type="entry name" value="FAD_binding_6"/>
    <property type="match status" value="1"/>
</dbReference>
<dbReference type="Pfam" id="PF03404">
    <property type="entry name" value="Mo-co_dimer"/>
    <property type="match status" value="1"/>
</dbReference>
<dbReference type="Pfam" id="PF00175">
    <property type="entry name" value="NAD_binding_1"/>
    <property type="match status" value="1"/>
</dbReference>
<dbReference type="Pfam" id="PF00174">
    <property type="entry name" value="Oxidored_molyb"/>
    <property type="match status" value="1"/>
</dbReference>
<dbReference type="PIRSF" id="PIRSF000233">
    <property type="entry name" value="Nitr_rd_NADH"/>
    <property type="match status" value="1"/>
</dbReference>
<dbReference type="PRINTS" id="PR00406">
    <property type="entry name" value="CYTB5RDTASE"/>
</dbReference>
<dbReference type="PRINTS" id="PR00363">
    <property type="entry name" value="CYTOCHROMEB5"/>
</dbReference>
<dbReference type="PRINTS" id="PR00407">
    <property type="entry name" value="EUMOPTERIN"/>
</dbReference>
<dbReference type="PRINTS" id="PR00371">
    <property type="entry name" value="FPNCR"/>
</dbReference>
<dbReference type="SMART" id="SM01117">
    <property type="entry name" value="Cyt-b5"/>
    <property type="match status" value="1"/>
</dbReference>
<dbReference type="SUPFAM" id="SSF55856">
    <property type="entry name" value="Cytochrome b5-like heme/steroid binding domain"/>
    <property type="match status" value="1"/>
</dbReference>
<dbReference type="SUPFAM" id="SSF81296">
    <property type="entry name" value="E set domains"/>
    <property type="match status" value="1"/>
</dbReference>
<dbReference type="SUPFAM" id="SSF52343">
    <property type="entry name" value="Ferredoxin reductase-like, C-terminal NADP-linked domain"/>
    <property type="match status" value="1"/>
</dbReference>
<dbReference type="SUPFAM" id="SSF56524">
    <property type="entry name" value="Oxidoreductase molybdopterin-binding domain"/>
    <property type="match status" value="1"/>
</dbReference>
<dbReference type="SUPFAM" id="SSF63380">
    <property type="entry name" value="Riboflavin synthase domain-like"/>
    <property type="match status" value="1"/>
</dbReference>
<dbReference type="PROSITE" id="PS00191">
    <property type="entry name" value="CYTOCHROME_B5_1"/>
    <property type="match status" value="1"/>
</dbReference>
<dbReference type="PROSITE" id="PS50255">
    <property type="entry name" value="CYTOCHROME_B5_2"/>
    <property type="match status" value="1"/>
</dbReference>
<dbReference type="PROSITE" id="PS51384">
    <property type="entry name" value="FAD_FR"/>
    <property type="match status" value="1"/>
</dbReference>
<dbReference type="PROSITE" id="PS00559">
    <property type="entry name" value="MOLYBDOPTERIN_EUK"/>
    <property type="match status" value="1"/>
</dbReference>
<accession>P54233</accession>
<sequence>MAASVDNRQYGTHINAVVRACGPDFNTPLPSDFDLDSSSDDEDQNDDASFLKELIQKANAETEASLLDPRDEGTADQWIPRNASMVRFTGKHPFNGEGPLPRLMHHGFITPSPLRYVRNHGPVPKIKWDEWTVEVTGLVKRSTHFTMEKLMREFPHREFPATLVCAGNRRKEHNMVKQSIGFNWGAAGGSTSVWRGVPLRHVLKRCGILARMKGAMYVSFEGAEDLPGGGGSKYGTSVKREMAMDPSRDIILAFMQNGEPLAPDHGFPVRMIIPGFIGGRMVKWLKRIVVTEHECDSHYHYKDNRVLPSHVDAELANDEGWWYKPEYIINELNINSVITTPCHEEILPINSWTTQMPYFIRGYAYSGGGRKVTRVEVTLDGGGTWQVCTLDCPEKPNKYGKYWCWCFWSVEVEVLDLLGAREIAVRAWDEALNTQPEKLIWNVMGMMNNCWFRVKTNVCRPHKGEIGIVFEHPTQPGNQSGGWMAKEKHLEKSSESNPTLKKSVSSPFMNTTSKTYTMSEVRRHNNADSAWIIVHGHVYDWTRFLKDHPGGTDRILINAGTDCTEEFEAIHSDKAKQMLEDYRIGELTTTCYNSDSSSSNPSVHGRSDTIPLTPIKEVITPMRSVALIPREKIPCKLISKTSISHDVRLFRFGLPSDGLLMGLAVGKHIFLCVTVDEKLCMRAYTPTSSVHEVGYFDLVVKVYFKGVHPKFPNGGIMSQHLDSLPIGSVLDVKGPLGHIEYTGRGNFLVHGKPRFATRLAMLAGGTGITPIYQVVQAILKDPEDCTEMHVVYANRTEDDILLKEELDEWAKKYDRLKVWYVIQESIREGWEYSVGFITESILTEHIPNASPDTLALTCGPPPMIQFAVQPNLEKLGYDTQNNLLVF</sequence>
<organism>
    <name type="scientific">Glycine max</name>
    <name type="common">Soybean</name>
    <name type="synonym">Glycine hispida</name>
    <dbReference type="NCBI Taxonomy" id="3847"/>
    <lineage>
        <taxon>Eukaryota</taxon>
        <taxon>Viridiplantae</taxon>
        <taxon>Streptophyta</taxon>
        <taxon>Embryophyta</taxon>
        <taxon>Tracheophyta</taxon>
        <taxon>Spermatophyta</taxon>
        <taxon>Magnoliopsida</taxon>
        <taxon>eudicotyledons</taxon>
        <taxon>Gunneridae</taxon>
        <taxon>Pentapetalae</taxon>
        <taxon>rosids</taxon>
        <taxon>fabids</taxon>
        <taxon>Fabales</taxon>
        <taxon>Fabaceae</taxon>
        <taxon>Papilionoideae</taxon>
        <taxon>50 kb inversion clade</taxon>
        <taxon>NPAAA clade</taxon>
        <taxon>indigoferoid/millettioid clade</taxon>
        <taxon>Phaseoleae</taxon>
        <taxon>Glycine</taxon>
        <taxon>Glycine subgen. Soja</taxon>
    </lineage>
</organism>
<feature type="chain" id="PRO_0000166069" description="Inducible nitrate reductase [NADH] 1">
    <location>
        <begin position="1"/>
        <end position="886"/>
    </location>
</feature>
<feature type="domain" description="Cytochrome b5 heme-binding" evidence="6">
    <location>
        <begin position="513"/>
        <end position="588"/>
    </location>
</feature>
<feature type="domain" description="FAD-binding FR-type" evidence="7">
    <location>
        <begin position="630"/>
        <end position="742"/>
    </location>
</feature>
<feature type="binding site" evidence="4">
    <location>
        <position position="165"/>
    </location>
    <ligand>
        <name>Mo-molybdopterin</name>
        <dbReference type="ChEBI" id="CHEBI:71302"/>
    </ligand>
    <ligandPart>
        <name>Mo</name>
        <dbReference type="ChEBI" id="CHEBI:28685"/>
    </ligandPart>
</feature>
<feature type="binding site" description="axial binding residue" evidence="6">
    <location>
        <position position="548"/>
    </location>
    <ligand>
        <name>heme</name>
        <dbReference type="ChEBI" id="CHEBI:30413"/>
    </ligand>
    <ligandPart>
        <name>Fe</name>
        <dbReference type="ChEBI" id="CHEBI:18248"/>
    </ligandPart>
</feature>
<feature type="binding site" description="axial binding residue" evidence="6">
    <location>
        <position position="571"/>
    </location>
    <ligand>
        <name>heme</name>
        <dbReference type="ChEBI" id="CHEBI:30413"/>
    </ligand>
    <ligandPart>
        <name>Fe</name>
        <dbReference type="ChEBI" id="CHEBI:18248"/>
    </ligandPart>
</feature>
<feature type="binding site" evidence="2">
    <location>
        <begin position="682"/>
        <end position="685"/>
    </location>
    <ligand>
        <name>FAD</name>
        <dbReference type="ChEBI" id="CHEBI:57692"/>
    </ligand>
</feature>
<feature type="binding site" evidence="2">
    <location>
        <begin position="699"/>
        <end position="703"/>
    </location>
    <ligand>
        <name>FAD</name>
        <dbReference type="ChEBI" id="CHEBI:57692"/>
    </ligand>
</feature>
<feature type="binding site" evidence="3">
    <location>
        <position position="704"/>
    </location>
    <ligand>
        <name>FAD</name>
        <dbReference type="ChEBI" id="CHEBI:57692"/>
    </ligand>
</feature>
<feature type="binding site" evidence="2">
    <location>
        <position position="711"/>
    </location>
    <ligand>
        <name>FAD</name>
        <dbReference type="ChEBI" id="CHEBI:57692"/>
    </ligand>
</feature>
<feature type="binding site" evidence="2">
    <location>
        <begin position="716"/>
        <end position="718"/>
    </location>
    <ligand>
        <name>FAD</name>
        <dbReference type="ChEBI" id="CHEBI:57692"/>
    </ligand>
</feature>
<feature type="binding site" evidence="2">
    <location>
        <position position="769"/>
    </location>
    <ligand>
        <name>FAD</name>
        <dbReference type="ChEBI" id="CHEBI:57692"/>
    </ligand>
</feature>
<feature type="disulfide bond" description="Interchain" evidence="5">
    <location>
        <position position="404"/>
    </location>
</feature>
<evidence type="ECO:0000250" key="1"/>
<evidence type="ECO:0000250" key="2">
    <source>
        <dbReference type="UniProtKB" id="A0A286R227"/>
    </source>
</evidence>
<evidence type="ECO:0000250" key="3">
    <source>
        <dbReference type="UniProtKB" id="P17571"/>
    </source>
</evidence>
<evidence type="ECO:0000250" key="4">
    <source>
        <dbReference type="UniProtKB" id="P49050"/>
    </source>
</evidence>
<evidence type="ECO:0000255" key="5"/>
<evidence type="ECO:0000255" key="6">
    <source>
        <dbReference type="PROSITE-ProRule" id="PRU00279"/>
    </source>
</evidence>
<evidence type="ECO:0000255" key="7">
    <source>
        <dbReference type="PROSITE-ProRule" id="PRU00716"/>
    </source>
</evidence>
<evidence type="ECO:0000305" key="8"/>
<keyword id="KW-1015">Disulfide bond</keyword>
<keyword id="KW-0274">FAD</keyword>
<keyword id="KW-0285">Flavoprotein</keyword>
<keyword id="KW-0349">Heme</keyword>
<keyword id="KW-0408">Iron</keyword>
<keyword id="KW-0479">Metal-binding</keyword>
<keyword id="KW-0500">Molybdenum</keyword>
<keyword id="KW-0520">NAD</keyword>
<keyword id="KW-0534">Nitrate assimilation</keyword>
<keyword id="KW-0560">Oxidoreductase</keyword>
<keyword id="KW-1185">Reference proteome</keyword>
<proteinExistence type="evidence at transcript level"/>